<feature type="chain" id="PRO_0000410297" description="Transcription elongation factor SPT5">
    <location>
        <begin position="1"/>
        <end position="1152"/>
    </location>
</feature>
<feature type="region of interest" description="Disordered" evidence="2">
    <location>
        <begin position="1"/>
        <end position="104"/>
    </location>
</feature>
<feature type="region of interest" description="Disordered" evidence="2">
    <location>
        <begin position="906"/>
        <end position="966"/>
    </location>
</feature>
<feature type="compositionally biased region" description="Acidic residues" evidence="2">
    <location>
        <begin position="68"/>
        <end position="95"/>
    </location>
</feature>
<feature type="compositionally biased region" description="Low complexity" evidence="2">
    <location>
        <begin position="939"/>
        <end position="966"/>
    </location>
</feature>
<name>SPT5_CRYNB</name>
<protein>
    <recommendedName>
        <fullName>Transcription elongation factor SPT5</fullName>
    </recommendedName>
    <alternativeName>
        <fullName>Chromatin elongation factor SPT5</fullName>
    </alternativeName>
</protein>
<keyword id="KW-0507">mRNA processing</keyword>
<keyword id="KW-0539">Nucleus</keyword>
<keyword id="KW-0804">Transcription</keyword>
<evidence type="ECO:0000250" key="1"/>
<evidence type="ECO:0000256" key="2">
    <source>
        <dbReference type="SAM" id="MobiDB-lite"/>
    </source>
</evidence>
<evidence type="ECO:0000305" key="3"/>
<gene>
    <name type="primary">SPT5</name>
    <name type="ordered locus">CNBA6020</name>
</gene>
<reference key="1">
    <citation type="journal article" date="2005" name="Science">
        <title>The genome of the basidiomycetous yeast and human pathogen Cryptococcus neoformans.</title>
        <authorList>
            <person name="Loftus B.J."/>
            <person name="Fung E."/>
            <person name="Roncaglia P."/>
            <person name="Rowley D."/>
            <person name="Amedeo P."/>
            <person name="Bruno D."/>
            <person name="Vamathevan J."/>
            <person name="Miranda M."/>
            <person name="Anderson I.J."/>
            <person name="Fraser J.A."/>
            <person name="Allen J.E."/>
            <person name="Bosdet I.E."/>
            <person name="Brent M.R."/>
            <person name="Chiu R."/>
            <person name="Doering T.L."/>
            <person name="Donlin M.J."/>
            <person name="D'Souza C.A."/>
            <person name="Fox D.S."/>
            <person name="Grinberg V."/>
            <person name="Fu J."/>
            <person name="Fukushima M."/>
            <person name="Haas B.J."/>
            <person name="Huang J.C."/>
            <person name="Janbon G."/>
            <person name="Jones S.J.M."/>
            <person name="Koo H.L."/>
            <person name="Krzywinski M.I."/>
            <person name="Kwon-Chung K.J."/>
            <person name="Lengeler K.B."/>
            <person name="Maiti R."/>
            <person name="Marra M.A."/>
            <person name="Marra R.E."/>
            <person name="Mathewson C.A."/>
            <person name="Mitchell T.G."/>
            <person name="Pertea M."/>
            <person name="Riggs F.R."/>
            <person name="Salzberg S.L."/>
            <person name="Schein J.E."/>
            <person name="Shvartsbeyn A."/>
            <person name="Shin H."/>
            <person name="Shumway M."/>
            <person name="Specht C.A."/>
            <person name="Suh B.B."/>
            <person name="Tenney A."/>
            <person name="Utterback T.R."/>
            <person name="Wickes B.L."/>
            <person name="Wortman J.R."/>
            <person name="Wye N.H."/>
            <person name="Kronstad J.W."/>
            <person name="Lodge J.K."/>
            <person name="Heitman J."/>
            <person name="Davis R.W."/>
            <person name="Fraser C.M."/>
            <person name="Hyman R.W."/>
        </authorList>
    </citation>
    <scope>NUCLEOTIDE SEQUENCE [LARGE SCALE GENOMIC DNA]</scope>
    <source>
        <strain>B-3501A</strain>
    </source>
</reference>
<sequence>MSDIEIKSSPPESPAEEQEERRLAGRKRARAVDPDEEDDDTQVVNNQDEENNPKEDDGEEGGNAQAEGADEGEDDEDEDEDDDDDDEDEDDEDDDGERRAKRRRKQKKFRFLDVEAEVDDEDEEEDEDNDYGDVAEFIDEAPEDVGARDDHQHRRLNRVFGRNEEEDVHDIVQRLKERHAGAARYNGDSDAVPQRLLMPGVNDPSLWKVVVKSGREHAICASIFRKVFAQQYSANPIDVISVFCRDSIPGMIFIEARQSASVSAAVNGIVGIFMSRGVNLVPIEEMAPLLKMKKKDVNLTPGMWVRMKRGKHAGDLAQVVDVDQITSGVVGIKFIPRIDLTPREKRKERIAIGKPGGVRPPARLFAYDDVRKIYGRQSVRQGAQGSYLFDNDEYVDGFCIKDVKIPAVATEDVNPTLEEISRFTGDDDSTAKFDLSAIADANKNLSTSLLFPGDKIEVYEGEQTGLYGIVEAVSPDVIAIKAEGGEVHGQTVEVPARSVRKRFDVGEHVKVLGGKHTDASGMVVEVKGDIVTLMSDLGEQEIKVFSKDLRKAADTTNLTVTKGLYDVHDMVMLDSTTAGVVTKVEGGLLRILDQNGAAKSVSPEQVSIRRDNKRFAVATDSQGNDMKVGDNMKETDGEMRQGEVFNIFRSIFVFLYNREYTDNFGVFVARANSLISVTPKSAVNDLTKINPALNQQLPYGGASLMPAPTANLNRNRLINTLVVVTKGTSKGLIGVIKDVQGENARVELKHNNKTLSVNLASLKRKDQKTGATFPLEMAGIASAAGGYGARPNAGQYDINPYGGATAMHPSMGGQTPALMGGRTPAARFGQTPNPYAAGVQNGKTPNPYAAGVGGKTPSAANASGGKTPAWGASGGKTPAYGMASGGKTPAYGMQGGKTPNAYAMAPPGPSGGRTPAYGAYGRPEASGSRPSVMAPPSAPYSAPYSAPTPAGNGAPTPAIPGNPYTAPTPYGAPTPYAAPTPGMPSLSAPTPGPGAGIAPTPFGAPTPYGAQSYGASAQQQRGLPWDWALDFRNVIVEIGPSYRPGSRNPLHFKRGFFDGKRFGYNDIIGENVRAILLDDPSVVEEIPAEYLRPAKADSQGQVVVVIGGGPEQKGQQRTTQYENGGSWMMELEGGDMAPLVVDGADLCRIWKV</sequence>
<dbReference type="EMBL" id="AAEY01000004">
    <property type="protein sequence ID" value="EAL23077.1"/>
    <property type="molecule type" value="Genomic_DNA"/>
</dbReference>
<dbReference type="RefSeq" id="XP_777724.1">
    <property type="nucleotide sequence ID" value="XM_772631.1"/>
</dbReference>
<dbReference type="SMR" id="P0CR71"/>
<dbReference type="EnsemblFungi" id="AAW41151">
    <property type="protein sequence ID" value="AAW41151"/>
    <property type="gene ID" value="CNA06210"/>
</dbReference>
<dbReference type="GeneID" id="4933866"/>
<dbReference type="KEGG" id="cnb:CNBA6020"/>
<dbReference type="VEuPathDB" id="FungiDB:CNBA6020"/>
<dbReference type="HOGENOM" id="CLU_003537_1_0_1"/>
<dbReference type="OrthoDB" id="6984at5206"/>
<dbReference type="GO" id="GO:0032044">
    <property type="term" value="C:DSIF complex"/>
    <property type="evidence" value="ECO:0007669"/>
    <property type="project" value="TreeGrafter"/>
</dbReference>
<dbReference type="GO" id="GO:0003729">
    <property type="term" value="F:mRNA binding"/>
    <property type="evidence" value="ECO:0007669"/>
    <property type="project" value="TreeGrafter"/>
</dbReference>
<dbReference type="GO" id="GO:0006397">
    <property type="term" value="P:mRNA processing"/>
    <property type="evidence" value="ECO:0007669"/>
    <property type="project" value="UniProtKB-KW"/>
</dbReference>
<dbReference type="GO" id="GO:0032784">
    <property type="term" value="P:regulation of DNA-templated transcription elongation"/>
    <property type="evidence" value="ECO:0007669"/>
    <property type="project" value="InterPro"/>
</dbReference>
<dbReference type="GO" id="GO:0006357">
    <property type="term" value="P:regulation of transcription by RNA polymerase II"/>
    <property type="evidence" value="ECO:0007669"/>
    <property type="project" value="InterPro"/>
</dbReference>
<dbReference type="GO" id="GO:0006368">
    <property type="term" value="P:transcription elongation by RNA polymerase II"/>
    <property type="evidence" value="ECO:0007669"/>
    <property type="project" value="TreeGrafter"/>
</dbReference>
<dbReference type="CDD" id="cd06081">
    <property type="entry name" value="KOW_Spt5_1"/>
    <property type="match status" value="1"/>
</dbReference>
<dbReference type="CDD" id="cd06082">
    <property type="entry name" value="KOW_Spt5_2"/>
    <property type="match status" value="1"/>
</dbReference>
<dbReference type="CDD" id="cd06083">
    <property type="entry name" value="KOW_Spt5_3"/>
    <property type="match status" value="1"/>
</dbReference>
<dbReference type="CDD" id="cd06084">
    <property type="entry name" value="KOW_Spt5_4"/>
    <property type="match status" value="1"/>
</dbReference>
<dbReference type="CDD" id="cd06085">
    <property type="entry name" value="KOW_Spt5_5"/>
    <property type="match status" value="1"/>
</dbReference>
<dbReference type="CDD" id="cd09888">
    <property type="entry name" value="NGN_Euk"/>
    <property type="match status" value="1"/>
</dbReference>
<dbReference type="FunFam" id="2.30.30.30:FF:000018">
    <property type="entry name" value="Transcription elongation factor SPT5"/>
    <property type="match status" value="1"/>
</dbReference>
<dbReference type="FunFam" id="2.30.30.30:FF:000029">
    <property type="entry name" value="Transcription elongation factor SPT5"/>
    <property type="match status" value="1"/>
</dbReference>
<dbReference type="FunFam" id="3.30.70.940:FF:000011">
    <property type="entry name" value="Transcription elongation factor SPT5"/>
    <property type="match status" value="1"/>
</dbReference>
<dbReference type="Gene3D" id="2.30.30.30">
    <property type="match status" value="3"/>
</dbReference>
<dbReference type="Gene3D" id="3.30.70.940">
    <property type="entry name" value="NusG, N-terminal domain"/>
    <property type="match status" value="1"/>
</dbReference>
<dbReference type="InterPro" id="IPR005824">
    <property type="entry name" value="KOW"/>
</dbReference>
<dbReference type="InterPro" id="IPR041973">
    <property type="entry name" value="KOW_Spt5_1"/>
</dbReference>
<dbReference type="InterPro" id="IPR041975">
    <property type="entry name" value="KOW_Spt5_2"/>
</dbReference>
<dbReference type="InterPro" id="IPR041976">
    <property type="entry name" value="KOW_Spt5_3"/>
</dbReference>
<dbReference type="InterPro" id="IPR041977">
    <property type="entry name" value="KOW_Spt5_4"/>
</dbReference>
<dbReference type="InterPro" id="IPR041978">
    <property type="entry name" value="KOW_Spt5_5"/>
</dbReference>
<dbReference type="InterPro" id="IPR005100">
    <property type="entry name" value="NGN-domain"/>
</dbReference>
<dbReference type="InterPro" id="IPR036735">
    <property type="entry name" value="NGN_dom_sf"/>
</dbReference>
<dbReference type="InterPro" id="IPR039385">
    <property type="entry name" value="NGN_Euk"/>
</dbReference>
<dbReference type="InterPro" id="IPR014722">
    <property type="entry name" value="Rib_uL2_dom2"/>
</dbReference>
<dbReference type="InterPro" id="IPR039659">
    <property type="entry name" value="SPT5"/>
</dbReference>
<dbReference type="InterPro" id="IPR024945">
    <property type="entry name" value="Spt5_C_dom"/>
</dbReference>
<dbReference type="InterPro" id="IPR022581">
    <property type="entry name" value="Spt5_N"/>
</dbReference>
<dbReference type="InterPro" id="IPR017071">
    <property type="entry name" value="TF_Spt5_eukaryote"/>
</dbReference>
<dbReference type="InterPro" id="IPR008991">
    <property type="entry name" value="Translation_prot_SH3-like_sf"/>
</dbReference>
<dbReference type="PANTHER" id="PTHR11125">
    <property type="entry name" value="SUPPRESSOR OF TY 5"/>
    <property type="match status" value="1"/>
</dbReference>
<dbReference type="PANTHER" id="PTHR11125:SF7">
    <property type="entry name" value="TRANSCRIPTION ELONGATION FACTOR SPT5"/>
    <property type="match status" value="1"/>
</dbReference>
<dbReference type="Pfam" id="PF12815">
    <property type="entry name" value="CTD"/>
    <property type="match status" value="1"/>
</dbReference>
<dbReference type="Pfam" id="PF23042">
    <property type="entry name" value="KOW1_SPT5"/>
    <property type="match status" value="1"/>
</dbReference>
<dbReference type="Pfam" id="PF23284">
    <property type="entry name" value="KOW2_Spt5"/>
    <property type="match status" value="1"/>
</dbReference>
<dbReference type="Pfam" id="PF23291">
    <property type="entry name" value="KOW4_SPT5"/>
    <property type="match status" value="1"/>
</dbReference>
<dbReference type="Pfam" id="PF23290">
    <property type="entry name" value="KOW5_SPT5"/>
    <property type="match status" value="1"/>
</dbReference>
<dbReference type="Pfam" id="PF23037">
    <property type="entry name" value="KOWx_SPT5"/>
    <property type="match status" value="1"/>
</dbReference>
<dbReference type="Pfam" id="PF03439">
    <property type="entry name" value="Spt5-NGN"/>
    <property type="match status" value="1"/>
</dbReference>
<dbReference type="Pfam" id="PF11942">
    <property type="entry name" value="Spt5_N"/>
    <property type="match status" value="1"/>
</dbReference>
<dbReference type="PIRSF" id="PIRSF036945">
    <property type="entry name" value="Spt5"/>
    <property type="match status" value="1"/>
</dbReference>
<dbReference type="SMART" id="SM01104">
    <property type="entry name" value="CTD"/>
    <property type="match status" value="1"/>
</dbReference>
<dbReference type="SMART" id="SM00739">
    <property type="entry name" value="KOW"/>
    <property type="match status" value="4"/>
</dbReference>
<dbReference type="SUPFAM" id="SSF50104">
    <property type="entry name" value="Translation proteins SH3-like domain"/>
    <property type="match status" value="1"/>
</dbReference>
<comment type="function">
    <text evidence="1">The SPT4-SPT5 complex mediates both activation and inhibition of transcription elongation, and plays a role in pre-mRNA processing. This complex seems to be important for the stability of the RNA polymerase II elongation machinery on the chromatin template but not for the inherent ability of this machinery to translocate down the gene (By similarity).</text>
</comment>
<comment type="subunit">
    <text evidence="1">Component of the SPT4-SPT5 complex. Interacts with RNA polymerase II (By similarity).</text>
</comment>
<comment type="subcellular location">
    <subcellularLocation>
        <location evidence="1">Nucleus</location>
    </subcellularLocation>
</comment>
<comment type="similarity">
    <text evidence="3">Belongs to the SPT5 family.</text>
</comment>
<organism>
    <name type="scientific">Cryptococcus neoformans var. neoformans serotype D (strain B-3501A)</name>
    <name type="common">Filobasidiella neoformans</name>
    <dbReference type="NCBI Taxonomy" id="283643"/>
    <lineage>
        <taxon>Eukaryota</taxon>
        <taxon>Fungi</taxon>
        <taxon>Dikarya</taxon>
        <taxon>Basidiomycota</taxon>
        <taxon>Agaricomycotina</taxon>
        <taxon>Tremellomycetes</taxon>
        <taxon>Tremellales</taxon>
        <taxon>Cryptococcaceae</taxon>
        <taxon>Cryptococcus</taxon>
        <taxon>Cryptococcus neoformans species complex</taxon>
    </lineage>
</organism>
<accession>P0CR71</accession>
<accession>Q55Z86</accession>
<accession>Q5KNK1</accession>
<proteinExistence type="inferred from homology"/>